<accession>P57392</accession>
<keyword id="KW-1003">Cell membrane</keyword>
<keyword id="KW-0472">Membrane</keyword>
<keyword id="KW-1185">Reference proteome</keyword>
<keyword id="KW-0812">Transmembrane</keyword>
<keyword id="KW-1133">Transmembrane helix</keyword>
<keyword id="KW-0813">Transport</keyword>
<protein>
    <recommendedName>
        <fullName evidence="1">Glycerol uptake facilitator protein</fullName>
    </recommendedName>
</protein>
<reference key="1">
    <citation type="journal article" date="2000" name="Nature">
        <title>Genome sequence of the endocellular bacterial symbiont of aphids Buchnera sp. APS.</title>
        <authorList>
            <person name="Shigenobu S."/>
            <person name="Watanabe H."/>
            <person name="Hattori M."/>
            <person name="Sakaki Y."/>
            <person name="Ishikawa H."/>
        </authorList>
    </citation>
    <scope>NUCLEOTIDE SEQUENCE [LARGE SCALE GENOMIC DNA]</scope>
    <source>
        <strain>APS</strain>
    </source>
</reference>
<name>GLPF_BUCAI</name>
<proteinExistence type="inferred from homology"/>
<gene>
    <name type="primary">glpF</name>
    <name type="ordered locus">BU306</name>
</gene>
<feature type="chain" id="PRO_0000064078" description="Glycerol uptake facilitator protein">
    <location>
        <begin position="1"/>
        <end position="263"/>
    </location>
</feature>
<feature type="topological domain" description="Cytoplasmic" evidence="1">
    <location>
        <begin position="1"/>
        <end position="7"/>
    </location>
</feature>
<feature type="transmembrane region" description="Helical; Name=M1" evidence="1">
    <location>
        <begin position="8"/>
        <end position="36"/>
    </location>
</feature>
<feature type="topological domain" description="Extracellular" evidence="1">
    <location>
        <begin position="37"/>
        <end position="41"/>
    </location>
</feature>
<feature type="transmembrane region" description="Helical; Name=M2" evidence="1">
    <location>
        <begin position="42"/>
        <end position="62"/>
    </location>
</feature>
<feature type="topological domain" description="Cytoplasmic" evidence="1">
    <location>
        <begin position="63"/>
        <end position="65"/>
    </location>
</feature>
<feature type="intramembrane region" evidence="1">
    <location>
        <begin position="66"/>
        <end position="69"/>
    </location>
</feature>
<feature type="intramembrane region" description="Helical; Name=M3" evidence="1">
    <location>
        <begin position="70"/>
        <end position="80"/>
    </location>
</feature>
<feature type="topological domain" description="Cytoplasmic" evidence="1">
    <location>
        <begin position="81"/>
        <end position="86"/>
    </location>
</feature>
<feature type="transmembrane region" description="Helical; Name=M4" evidence="1">
    <location>
        <begin position="87"/>
        <end position="110"/>
    </location>
</feature>
<feature type="topological domain" description="Extracellular" evidence="1">
    <location>
        <begin position="111"/>
        <end position="145"/>
    </location>
</feature>
<feature type="transmembrane region" description="Helical; Name=M5" evidence="1">
    <location>
        <begin position="146"/>
        <end position="171"/>
    </location>
</feature>
<feature type="topological domain" description="Cytoplasmic" evidence="1">
    <location>
        <begin position="172"/>
        <end position="181"/>
    </location>
</feature>
<feature type="transmembrane region" description="Helical; Name=M6" evidence="1">
    <location>
        <begin position="182"/>
        <end position="198"/>
    </location>
</feature>
<feature type="topological domain" description="Extracellular" evidence="1">
    <location>
        <begin position="199"/>
        <end position="202"/>
    </location>
</feature>
<feature type="intramembrane region" evidence="1">
    <location>
        <begin position="203"/>
        <end position="206"/>
    </location>
</feature>
<feature type="intramembrane region" description="Helical; Name=M7" evidence="1">
    <location>
        <begin position="207"/>
        <end position="220"/>
    </location>
</feature>
<feature type="topological domain" description="Extracellular" evidence="1">
    <location>
        <begin position="221"/>
        <end position="236"/>
    </location>
</feature>
<feature type="transmembrane region" description="Helical; Name=M8" evidence="1">
    <location>
        <begin position="237"/>
        <end position="259"/>
    </location>
</feature>
<feature type="topological domain" description="Cytoplasmic" evidence="1">
    <location>
        <begin position="260"/>
        <end position="263"/>
    </location>
</feature>
<feature type="short sequence motif" description="NPA 1" evidence="2">
    <location>
        <begin position="70"/>
        <end position="72"/>
    </location>
</feature>
<feature type="short sequence motif" description="NPA 2" evidence="2">
    <location>
        <begin position="207"/>
        <end position="209"/>
    </location>
</feature>
<sequence>MNIYRKKNIIKKCFMEFFGTGLVMFFGIGCLAASKLTNANFTQFEISCIWGFGVSIAIYFSSSISGAHLNPAVTIFFWLSSKLNKRKVLPYIISQTLGSFFFTMLTYYLYNNLLISFERNNNVVRGTQESLNLASIFCVYPNYNNSFIYDFIIEIFSTALFILIVLEFNNRNSNYFLYNRSVAPILTGFLVCMINLVINPLNNISLNPARDLGPKILLSLTGWGLFSFTGGNDNILYCFIPIMGPILGANLGGWIHKTLINNS</sequence>
<organism>
    <name type="scientific">Buchnera aphidicola subsp. Acyrthosiphon pisum (strain APS)</name>
    <name type="common">Acyrthosiphon pisum symbiotic bacterium</name>
    <dbReference type="NCBI Taxonomy" id="107806"/>
    <lineage>
        <taxon>Bacteria</taxon>
        <taxon>Pseudomonadati</taxon>
        <taxon>Pseudomonadota</taxon>
        <taxon>Gammaproteobacteria</taxon>
        <taxon>Enterobacterales</taxon>
        <taxon>Erwiniaceae</taxon>
        <taxon>Buchnera</taxon>
    </lineage>
</organism>
<comment type="function">
    <text evidence="1">Mediates glycerol diffusion across the cytoplasmic membrane via a pore-type mechanism.</text>
</comment>
<comment type="catalytic activity">
    <reaction evidence="1">
        <text>glycerol(in) = glycerol(out)</text>
        <dbReference type="Rhea" id="RHEA:29675"/>
        <dbReference type="ChEBI" id="CHEBI:17754"/>
    </reaction>
</comment>
<comment type="subcellular location">
    <subcellularLocation>
        <location evidence="1">Cell membrane</location>
        <topology evidence="1">Multi-pass membrane protein</topology>
    </subcellularLocation>
</comment>
<comment type="domain">
    <text evidence="2">Aquaporins contain two tandem repeats each containing three membrane-spanning domains and a pore-forming loop with the signature motif Asn-Pro-Ala (NPA).</text>
</comment>
<comment type="similarity">
    <text evidence="2">Belongs to the MIP/aquaporin (TC 1.A.8) family.</text>
</comment>
<dbReference type="EMBL" id="BA000003">
    <property type="protein sequence ID" value="BAB13015.1"/>
    <property type="molecule type" value="Genomic_DNA"/>
</dbReference>
<dbReference type="RefSeq" id="NP_240129.1">
    <property type="nucleotide sequence ID" value="NC_002528.1"/>
</dbReference>
<dbReference type="RefSeq" id="WP_010896060.1">
    <property type="nucleotide sequence ID" value="NZ_AP036055.1"/>
</dbReference>
<dbReference type="SMR" id="P57392"/>
<dbReference type="STRING" id="563178.BUAP5A_300"/>
<dbReference type="EnsemblBacteria" id="BAB13015">
    <property type="protein sequence ID" value="BAB13015"/>
    <property type="gene ID" value="BAB13015"/>
</dbReference>
<dbReference type="KEGG" id="buc:BU306"/>
<dbReference type="PATRIC" id="fig|107806.10.peg.317"/>
<dbReference type="eggNOG" id="COG0580">
    <property type="taxonomic scope" value="Bacteria"/>
</dbReference>
<dbReference type="HOGENOM" id="CLU_020019_9_3_6"/>
<dbReference type="Proteomes" id="UP000001806">
    <property type="component" value="Chromosome"/>
</dbReference>
<dbReference type="GO" id="GO:0005886">
    <property type="term" value="C:plasma membrane"/>
    <property type="evidence" value="ECO:0007669"/>
    <property type="project" value="UniProtKB-SubCell"/>
</dbReference>
<dbReference type="GO" id="GO:0015254">
    <property type="term" value="F:glycerol channel activity"/>
    <property type="evidence" value="ECO:0007669"/>
    <property type="project" value="TreeGrafter"/>
</dbReference>
<dbReference type="Gene3D" id="1.20.1080.10">
    <property type="entry name" value="Glycerol uptake facilitator protein"/>
    <property type="match status" value="1"/>
</dbReference>
<dbReference type="InterPro" id="IPR023271">
    <property type="entry name" value="Aquaporin-like"/>
</dbReference>
<dbReference type="InterPro" id="IPR000425">
    <property type="entry name" value="MIP"/>
</dbReference>
<dbReference type="InterPro" id="IPR050363">
    <property type="entry name" value="MIP/Aquaporin"/>
</dbReference>
<dbReference type="InterPro" id="IPR022357">
    <property type="entry name" value="MIP_CS"/>
</dbReference>
<dbReference type="PANTHER" id="PTHR43829">
    <property type="entry name" value="AQUAPORIN OR AQUAGLYCEROPORIN RELATED"/>
    <property type="match status" value="1"/>
</dbReference>
<dbReference type="PANTHER" id="PTHR43829:SF9">
    <property type="entry name" value="AQUAPORIN-9"/>
    <property type="match status" value="1"/>
</dbReference>
<dbReference type="Pfam" id="PF00230">
    <property type="entry name" value="MIP"/>
    <property type="match status" value="1"/>
</dbReference>
<dbReference type="PRINTS" id="PR00783">
    <property type="entry name" value="MINTRINSICP"/>
</dbReference>
<dbReference type="SUPFAM" id="SSF81338">
    <property type="entry name" value="Aquaporin-like"/>
    <property type="match status" value="1"/>
</dbReference>
<dbReference type="PROSITE" id="PS00221">
    <property type="entry name" value="MIP"/>
    <property type="match status" value="1"/>
</dbReference>
<evidence type="ECO:0000250" key="1">
    <source>
        <dbReference type="UniProtKB" id="P0AER0"/>
    </source>
</evidence>
<evidence type="ECO:0000305" key="2"/>